<proteinExistence type="inferred from homology"/>
<feature type="chain" id="PRO_0000146316" description="Small ribosomal subunit protein uS12">
    <location>
        <begin position="1"/>
        <end position="137"/>
    </location>
</feature>
<feature type="region of interest" description="Disordered" evidence="3">
    <location>
        <begin position="1"/>
        <end position="55"/>
    </location>
</feature>
<feature type="region of interest" description="Disordered" evidence="3">
    <location>
        <begin position="118"/>
        <end position="137"/>
    </location>
</feature>
<feature type="modified residue" description="3-methylthioaspartic acid" evidence="1">
    <location>
        <position position="102"/>
    </location>
</feature>
<keyword id="KW-0488">Methylation</keyword>
<keyword id="KW-1185">Reference proteome</keyword>
<keyword id="KW-0687">Ribonucleoprotein</keyword>
<keyword id="KW-0689">Ribosomal protein</keyword>
<keyword id="KW-0694">RNA-binding</keyword>
<keyword id="KW-0699">rRNA-binding</keyword>
<keyword id="KW-0820">tRNA-binding</keyword>
<organism>
    <name type="scientific">Staphylococcus epidermidis (strain ATCC 35984 / DSM 28319 / BCRC 17069 / CCUG 31568 / BM 3577 / RP62A)</name>
    <dbReference type="NCBI Taxonomy" id="176279"/>
    <lineage>
        <taxon>Bacteria</taxon>
        <taxon>Bacillati</taxon>
        <taxon>Bacillota</taxon>
        <taxon>Bacilli</taxon>
        <taxon>Bacillales</taxon>
        <taxon>Staphylococcaceae</taxon>
        <taxon>Staphylococcus</taxon>
    </lineage>
</organism>
<reference key="1">
    <citation type="journal article" date="2005" name="J. Bacteriol.">
        <title>Insights on evolution of virulence and resistance from the complete genome analysis of an early methicillin-resistant Staphylococcus aureus strain and a biofilm-producing methicillin-resistant Staphylococcus epidermidis strain.</title>
        <authorList>
            <person name="Gill S.R."/>
            <person name="Fouts D.E."/>
            <person name="Archer G.L."/>
            <person name="Mongodin E.F."/>
            <person name="DeBoy R.T."/>
            <person name="Ravel J."/>
            <person name="Paulsen I.T."/>
            <person name="Kolonay J.F."/>
            <person name="Brinkac L.M."/>
            <person name="Beanan M.J."/>
            <person name="Dodson R.J."/>
            <person name="Daugherty S.C."/>
            <person name="Madupu R."/>
            <person name="Angiuoli S.V."/>
            <person name="Durkin A.S."/>
            <person name="Haft D.H."/>
            <person name="Vamathevan J.J."/>
            <person name="Khouri H."/>
            <person name="Utterback T.R."/>
            <person name="Lee C."/>
            <person name="Dimitrov G."/>
            <person name="Jiang L."/>
            <person name="Qin H."/>
            <person name="Weidman J."/>
            <person name="Tran K."/>
            <person name="Kang K.H."/>
            <person name="Hance I.R."/>
            <person name="Nelson K.E."/>
            <person name="Fraser C.M."/>
        </authorList>
    </citation>
    <scope>NUCLEOTIDE SEQUENCE [LARGE SCALE GENOMIC DNA]</scope>
    <source>
        <strain>ATCC 35984 / DSM 28319 / BCRC 17069 / CCUG 31568 / BM 3577 / RP62A</strain>
    </source>
</reference>
<name>RS12_STAEQ</name>
<comment type="function">
    <text evidence="2">With S4 and S5 plays an important role in translational accuracy.</text>
</comment>
<comment type="function">
    <text evidence="2">Interacts with and stabilizes bases of the 16S rRNA that are involved in tRNA selection in the A site and with the mRNA backbone. Located at the interface of the 30S and 50S subunits, it traverses the body of the 30S subunit contacting proteins on the other side and probably holding the rRNA structure together. The combined cluster of proteins S8, S12 and S17 appears to hold together the shoulder and platform of the 30S subunit.</text>
</comment>
<comment type="subunit">
    <text evidence="2">Part of the 30S ribosomal subunit. Contacts proteins S8 and S17. May interact with IF1 in the 30S initiation complex.</text>
</comment>
<comment type="similarity">
    <text evidence="2">Belongs to the universal ribosomal protein uS12 family.</text>
</comment>
<sequence length="137" mass="15288">MPTINQLVRKPRKSKTKQSDSPALNRGFNSKKKQFTNLNSPQKRGVCTRVGTMTPKKPNSALRKYARVRLSNNIEVNAYIPGIGHNLQEHSVVLVRGGRVKDLPGVRYHIVRGALDTSGVDGRRQGRSLYGTKKPKN</sequence>
<accession>Q5HRK7</accession>
<evidence type="ECO:0000250" key="1"/>
<evidence type="ECO:0000255" key="2">
    <source>
        <dbReference type="HAMAP-Rule" id="MF_00403"/>
    </source>
</evidence>
<evidence type="ECO:0000256" key="3">
    <source>
        <dbReference type="SAM" id="MobiDB-lite"/>
    </source>
</evidence>
<evidence type="ECO:0000305" key="4"/>
<gene>
    <name evidence="2" type="primary">rpsL</name>
    <name type="ordered locus">SERP0186</name>
</gene>
<protein>
    <recommendedName>
        <fullName evidence="2">Small ribosomal subunit protein uS12</fullName>
    </recommendedName>
    <alternativeName>
        <fullName evidence="4">30S ribosomal protein S12</fullName>
    </alternativeName>
</protein>
<dbReference type="EMBL" id="CP000029">
    <property type="protein sequence ID" value="AAW53583.1"/>
    <property type="molecule type" value="Genomic_DNA"/>
</dbReference>
<dbReference type="RefSeq" id="WP_001833079.1">
    <property type="nucleotide sequence ID" value="NC_002976.3"/>
</dbReference>
<dbReference type="SMR" id="Q5HRK7"/>
<dbReference type="STRING" id="176279.SERP0186"/>
<dbReference type="GeneID" id="50019526"/>
<dbReference type="KEGG" id="ser:SERP0186"/>
<dbReference type="eggNOG" id="COG0048">
    <property type="taxonomic scope" value="Bacteria"/>
</dbReference>
<dbReference type="HOGENOM" id="CLU_104295_1_2_9"/>
<dbReference type="Proteomes" id="UP000000531">
    <property type="component" value="Chromosome"/>
</dbReference>
<dbReference type="GO" id="GO:0015935">
    <property type="term" value="C:small ribosomal subunit"/>
    <property type="evidence" value="ECO:0007669"/>
    <property type="project" value="InterPro"/>
</dbReference>
<dbReference type="GO" id="GO:0019843">
    <property type="term" value="F:rRNA binding"/>
    <property type="evidence" value="ECO:0007669"/>
    <property type="project" value="UniProtKB-UniRule"/>
</dbReference>
<dbReference type="GO" id="GO:0003735">
    <property type="term" value="F:structural constituent of ribosome"/>
    <property type="evidence" value="ECO:0007669"/>
    <property type="project" value="InterPro"/>
</dbReference>
<dbReference type="GO" id="GO:0000049">
    <property type="term" value="F:tRNA binding"/>
    <property type="evidence" value="ECO:0007669"/>
    <property type="project" value="UniProtKB-UniRule"/>
</dbReference>
<dbReference type="GO" id="GO:0006412">
    <property type="term" value="P:translation"/>
    <property type="evidence" value="ECO:0007669"/>
    <property type="project" value="UniProtKB-UniRule"/>
</dbReference>
<dbReference type="CDD" id="cd03368">
    <property type="entry name" value="Ribosomal_S12"/>
    <property type="match status" value="1"/>
</dbReference>
<dbReference type="FunFam" id="2.40.50.140:FF:000001">
    <property type="entry name" value="30S ribosomal protein S12"/>
    <property type="match status" value="1"/>
</dbReference>
<dbReference type="Gene3D" id="2.40.50.140">
    <property type="entry name" value="Nucleic acid-binding proteins"/>
    <property type="match status" value="1"/>
</dbReference>
<dbReference type="HAMAP" id="MF_00403_B">
    <property type="entry name" value="Ribosomal_uS12_B"/>
    <property type="match status" value="1"/>
</dbReference>
<dbReference type="InterPro" id="IPR012340">
    <property type="entry name" value="NA-bd_OB-fold"/>
</dbReference>
<dbReference type="InterPro" id="IPR006032">
    <property type="entry name" value="Ribosomal_uS12"/>
</dbReference>
<dbReference type="InterPro" id="IPR005679">
    <property type="entry name" value="Ribosomal_uS12_bac"/>
</dbReference>
<dbReference type="NCBIfam" id="TIGR00981">
    <property type="entry name" value="rpsL_bact"/>
    <property type="match status" value="1"/>
</dbReference>
<dbReference type="PANTHER" id="PTHR11652">
    <property type="entry name" value="30S RIBOSOMAL PROTEIN S12 FAMILY MEMBER"/>
    <property type="match status" value="1"/>
</dbReference>
<dbReference type="Pfam" id="PF00164">
    <property type="entry name" value="Ribosom_S12_S23"/>
    <property type="match status" value="1"/>
</dbReference>
<dbReference type="PIRSF" id="PIRSF002133">
    <property type="entry name" value="Ribosomal_S12/S23"/>
    <property type="match status" value="1"/>
</dbReference>
<dbReference type="PRINTS" id="PR01034">
    <property type="entry name" value="RIBOSOMALS12"/>
</dbReference>
<dbReference type="SUPFAM" id="SSF50249">
    <property type="entry name" value="Nucleic acid-binding proteins"/>
    <property type="match status" value="1"/>
</dbReference>
<dbReference type="PROSITE" id="PS00055">
    <property type="entry name" value="RIBOSOMAL_S12"/>
    <property type="match status" value="1"/>
</dbReference>